<name>DDL_RHIWR</name>
<protein>
    <recommendedName>
        <fullName evidence="2">D-alanine--D-alanine ligase</fullName>
        <ecNumber evidence="2">6.3.2.4</ecNumber>
    </recommendedName>
    <alternativeName>
        <fullName evidence="2">D-Ala-D-Ala ligase</fullName>
    </alternativeName>
    <alternativeName>
        <fullName evidence="2">D-alanylalanine synthetase</fullName>
    </alternativeName>
</protein>
<gene>
    <name evidence="2" type="primary">ddl</name>
    <name type="ordered locus">Swit_3943</name>
</gene>
<feature type="chain" id="PRO_0000341176" description="D-alanine--D-alanine ligase">
    <location>
        <begin position="1"/>
        <end position="312"/>
    </location>
</feature>
<feature type="domain" description="ATP-grasp" evidence="2">
    <location>
        <begin position="103"/>
        <end position="303"/>
    </location>
</feature>
<feature type="binding site" evidence="2">
    <location>
        <begin position="130"/>
        <end position="186"/>
    </location>
    <ligand>
        <name>ATP</name>
        <dbReference type="ChEBI" id="CHEBI:30616"/>
    </ligand>
</feature>
<feature type="binding site" evidence="2">
    <location>
        <position position="254"/>
    </location>
    <ligand>
        <name>Mg(2+)</name>
        <dbReference type="ChEBI" id="CHEBI:18420"/>
        <label>1</label>
    </ligand>
</feature>
<feature type="binding site" evidence="2">
    <location>
        <position position="270"/>
    </location>
    <ligand>
        <name>Mg(2+)</name>
        <dbReference type="ChEBI" id="CHEBI:18420"/>
        <label>1</label>
    </ligand>
</feature>
<feature type="binding site" evidence="2">
    <location>
        <position position="270"/>
    </location>
    <ligand>
        <name>Mg(2+)</name>
        <dbReference type="ChEBI" id="CHEBI:18420"/>
        <label>2</label>
    </ligand>
</feature>
<feature type="binding site" evidence="2">
    <location>
        <position position="272"/>
    </location>
    <ligand>
        <name>Mg(2+)</name>
        <dbReference type="ChEBI" id="CHEBI:18420"/>
        <label>2</label>
    </ligand>
</feature>
<reference key="1">
    <citation type="journal article" date="2010" name="J. Bacteriol.">
        <title>Genome sequence of the dioxin-mineralizing bacterium Sphingomonas wittichii RW1.</title>
        <authorList>
            <person name="Miller T.R."/>
            <person name="Delcher A.L."/>
            <person name="Salzberg S.L."/>
            <person name="Saunders E."/>
            <person name="Detter J.C."/>
            <person name="Halden R.U."/>
        </authorList>
    </citation>
    <scope>NUCLEOTIDE SEQUENCE [LARGE SCALE GENOMIC DNA]</scope>
    <source>
        <strain>DSM 6014 / CCUG 31198 / JCM 15750 / NBRC 105917 / EY 4224 / RW1</strain>
    </source>
</reference>
<comment type="function">
    <text evidence="2">Cell wall formation.</text>
</comment>
<comment type="catalytic activity">
    <reaction evidence="2">
        <text>2 D-alanine + ATP = D-alanyl-D-alanine + ADP + phosphate + H(+)</text>
        <dbReference type="Rhea" id="RHEA:11224"/>
        <dbReference type="ChEBI" id="CHEBI:15378"/>
        <dbReference type="ChEBI" id="CHEBI:30616"/>
        <dbReference type="ChEBI" id="CHEBI:43474"/>
        <dbReference type="ChEBI" id="CHEBI:57416"/>
        <dbReference type="ChEBI" id="CHEBI:57822"/>
        <dbReference type="ChEBI" id="CHEBI:456216"/>
        <dbReference type="EC" id="6.3.2.4"/>
    </reaction>
</comment>
<comment type="cofactor">
    <cofactor evidence="1">
        <name>Mg(2+)</name>
        <dbReference type="ChEBI" id="CHEBI:18420"/>
    </cofactor>
    <cofactor evidence="1">
        <name>Mn(2+)</name>
        <dbReference type="ChEBI" id="CHEBI:29035"/>
    </cofactor>
    <text evidence="1">Binds 2 magnesium or manganese ions per subunit.</text>
</comment>
<comment type="pathway">
    <text evidence="2">Cell wall biogenesis; peptidoglycan biosynthesis.</text>
</comment>
<comment type="subcellular location">
    <subcellularLocation>
        <location evidence="2">Cytoplasm</location>
    </subcellularLocation>
</comment>
<comment type="similarity">
    <text evidence="2">Belongs to the D-alanine--D-alanine ligase family.</text>
</comment>
<keyword id="KW-0067">ATP-binding</keyword>
<keyword id="KW-0133">Cell shape</keyword>
<keyword id="KW-0961">Cell wall biogenesis/degradation</keyword>
<keyword id="KW-0963">Cytoplasm</keyword>
<keyword id="KW-0436">Ligase</keyword>
<keyword id="KW-0460">Magnesium</keyword>
<keyword id="KW-0464">Manganese</keyword>
<keyword id="KW-0479">Metal-binding</keyword>
<keyword id="KW-0547">Nucleotide-binding</keyword>
<keyword id="KW-0573">Peptidoglycan synthesis</keyword>
<keyword id="KW-1185">Reference proteome</keyword>
<dbReference type="EC" id="6.3.2.4" evidence="2"/>
<dbReference type="EMBL" id="CP000699">
    <property type="protein sequence ID" value="ABQ70288.1"/>
    <property type="molecule type" value="Genomic_DNA"/>
</dbReference>
<dbReference type="SMR" id="A5VDC2"/>
<dbReference type="STRING" id="392499.Swit_3943"/>
<dbReference type="PaxDb" id="392499-Swit_3943"/>
<dbReference type="KEGG" id="swi:Swit_3943"/>
<dbReference type="eggNOG" id="COG1181">
    <property type="taxonomic scope" value="Bacteria"/>
</dbReference>
<dbReference type="HOGENOM" id="CLU_039268_1_1_5"/>
<dbReference type="OrthoDB" id="9813261at2"/>
<dbReference type="UniPathway" id="UPA00219"/>
<dbReference type="Proteomes" id="UP000001989">
    <property type="component" value="Chromosome"/>
</dbReference>
<dbReference type="GO" id="GO:0005737">
    <property type="term" value="C:cytoplasm"/>
    <property type="evidence" value="ECO:0007669"/>
    <property type="project" value="UniProtKB-SubCell"/>
</dbReference>
<dbReference type="GO" id="GO:0005524">
    <property type="term" value="F:ATP binding"/>
    <property type="evidence" value="ECO:0007669"/>
    <property type="project" value="UniProtKB-KW"/>
</dbReference>
<dbReference type="GO" id="GO:0008716">
    <property type="term" value="F:D-alanine-D-alanine ligase activity"/>
    <property type="evidence" value="ECO:0007669"/>
    <property type="project" value="UniProtKB-UniRule"/>
</dbReference>
<dbReference type="GO" id="GO:0046872">
    <property type="term" value="F:metal ion binding"/>
    <property type="evidence" value="ECO:0007669"/>
    <property type="project" value="UniProtKB-KW"/>
</dbReference>
<dbReference type="GO" id="GO:0071555">
    <property type="term" value="P:cell wall organization"/>
    <property type="evidence" value="ECO:0007669"/>
    <property type="project" value="UniProtKB-KW"/>
</dbReference>
<dbReference type="GO" id="GO:0009252">
    <property type="term" value="P:peptidoglycan biosynthetic process"/>
    <property type="evidence" value="ECO:0007669"/>
    <property type="project" value="UniProtKB-UniRule"/>
</dbReference>
<dbReference type="GO" id="GO:0008360">
    <property type="term" value="P:regulation of cell shape"/>
    <property type="evidence" value="ECO:0007669"/>
    <property type="project" value="UniProtKB-KW"/>
</dbReference>
<dbReference type="Gene3D" id="3.40.50.20">
    <property type="match status" value="1"/>
</dbReference>
<dbReference type="Gene3D" id="3.30.1490.20">
    <property type="entry name" value="ATP-grasp fold, A domain"/>
    <property type="match status" value="1"/>
</dbReference>
<dbReference type="Gene3D" id="3.30.470.20">
    <property type="entry name" value="ATP-grasp fold, B domain"/>
    <property type="match status" value="1"/>
</dbReference>
<dbReference type="HAMAP" id="MF_00047">
    <property type="entry name" value="Dala_Dala_lig"/>
    <property type="match status" value="1"/>
</dbReference>
<dbReference type="InterPro" id="IPR011761">
    <property type="entry name" value="ATP-grasp"/>
</dbReference>
<dbReference type="InterPro" id="IPR013815">
    <property type="entry name" value="ATP_grasp_subdomain_1"/>
</dbReference>
<dbReference type="InterPro" id="IPR000291">
    <property type="entry name" value="D-Ala_lig_Van_CS"/>
</dbReference>
<dbReference type="InterPro" id="IPR005905">
    <property type="entry name" value="D_ala_D_ala"/>
</dbReference>
<dbReference type="InterPro" id="IPR011095">
    <property type="entry name" value="Dala_Dala_lig_C"/>
</dbReference>
<dbReference type="InterPro" id="IPR011127">
    <property type="entry name" value="Dala_Dala_lig_N"/>
</dbReference>
<dbReference type="InterPro" id="IPR016185">
    <property type="entry name" value="PreATP-grasp_dom_sf"/>
</dbReference>
<dbReference type="NCBIfam" id="TIGR01205">
    <property type="entry name" value="D_ala_D_alaTIGR"/>
    <property type="match status" value="1"/>
</dbReference>
<dbReference type="NCBIfam" id="NF002378">
    <property type="entry name" value="PRK01372.1"/>
    <property type="match status" value="1"/>
</dbReference>
<dbReference type="PANTHER" id="PTHR23132">
    <property type="entry name" value="D-ALANINE--D-ALANINE LIGASE"/>
    <property type="match status" value="1"/>
</dbReference>
<dbReference type="PANTHER" id="PTHR23132:SF23">
    <property type="entry name" value="D-ALANINE--D-ALANINE LIGASE B"/>
    <property type="match status" value="1"/>
</dbReference>
<dbReference type="Pfam" id="PF07478">
    <property type="entry name" value="Dala_Dala_lig_C"/>
    <property type="match status" value="1"/>
</dbReference>
<dbReference type="Pfam" id="PF01820">
    <property type="entry name" value="Dala_Dala_lig_N"/>
    <property type="match status" value="1"/>
</dbReference>
<dbReference type="PIRSF" id="PIRSF039102">
    <property type="entry name" value="Ddl/VanB"/>
    <property type="match status" value="1"/>
</dbReference>
<dbReference type="SUPFAM" id="SSF56059">
    <property type="entry name" value="Glutathione synthetase ATP-binding domain-like"/>
    <property type="match status" value="1"/>
</dbReference>
<dbReference type="SUPFAM" id="SSF52440">
    <property type="entry name" value="PreATP-grasp domain"/>
    <property type="match status" value="1"/>
</dbReference>
<dbReference type="PROSITE" id="PS50975">
    <property type="entry name" value="ATP_GRASP"/>
    <property type="match status" value="1"/>
</dbReference>
<dbReference type="PROSITE" id="PS00843">
    <property type="entry name" value="DALA_DALA_LIGASE_1"/>
    <property type="match status" value="1"/>
</dbReference>
<dbReference type="PROSITE" id="PS00844">
    <property type="entry name" value="DALA_DALA_LIGASE_2"/>
    <property type="match status" value="1"/>
</dbReference>
<sequence>MTHPLHIAVLMGGWSSEREVSLTSGNGVADALESLGHKVTRIDMDRDVALRLAEAKPDVVFNALHGTPGEDGTVQGMMDLMGLTYTHSGLTTSVIAIDKELTKQQLVPHGIRMPEGIIVESESLHAGDPMPRPYVLKPVNEGSSVGVAIIKERDNHGVPIHRDSHGPWQTFATLLAEPFIRGRELTVAVLGNRALGVTELVPSSGFYDYEAKYTDGLTTHICPADVPADIAEAAMRMALDAHRLLGCKGTSRSDFRWDDERGEAGLYLLEVNTQPGMTPLSLVPEQARHVGLTYADLVQAIVDEALAGKAAR</sequence>
<organism>
    <name type="scientific">Rhizorhabdus wittichii (strain DSM 6014 / CCUG 31198 / JCM 15750 / NBRC 105917 / EY 4224 / RW1)</name>
    <name type="common">Sphingomonas wittichii</name>
    <dbReference type="NCBI Taxonomy" id="392499"/>
    <lineage>
        <taxon>Bacteria</taxon>
        <taxon>Pseudomonadati</taxon>
        <taxon>Pseudomonadota</taxon>
        <taxon>Alphaproteobacteria</taxon>
        <taxon>Sphingomonadales</taxon>
        <taxon>Sphingomonadaceae</taxon>
        <taxon>Rhizorhabdus</taxon>
    </lineage>
</organism>
<accession>A5VDC2</accession>
<proteinExistence type="inferred from homology"/>
<evidence type="ECO:0000250" key="1"/>
<evidence type="ECO:0000255" key="2">
    <source>
        <dbReference type="HAMAP-Rule" id="MF_00047"/>
    </source>
</evidence>